<organism>
    <name type="scientific">Human herpesvirus 2 (strain HG52)</name>
    <name type="common">HHV-2</name>
    <name type="synonym">Human herpes simplex virus 2</name>
    <dbReference type="NCBI Taxonomy" id="10315"/>
    <lineage>
        <taxon>Viruses</taxon>
        <taxon>Duplodnaviria</taxon>
        <taxon>Heunggongvirae</taxon>
        <taxon>Peploviricota</taxon>
        <taxon>Herviviricetes</taxon>
        <taxon>Herpesvirales</taxon>
        <taxon>Orthoherpesviridae</taxon>
        <taxon>Alphaherpesvirinae</taxon>
        <taxon>Simplexvirus</taxon>
        <taxon>Simplexvirus humanalpha2</taxon>
        <taxon>Human herpesvirus 2</taxon>
    </lineage>
</organism>
<organismHost>
    <name type="scientific">Homo sapiens</name>
    <name type="common">Human</name>
    <dbReference type="NCBI Taxonomy" id="9606"/>
</organismHost>
<reference key="1">
    <citation type="journal article" date="1991" name="J. Gen. Virol.">
        <title>Comparative sequence analysis of the long repeat regions and adjoining parts of the long unique regions in the genomes of herpes simplex viruses types 1 and 2.</title>
        <authorList>
            <person name="McGeoch D.J."/>
            <person name="Cunningham C."/>
            <person name="McIntyre G."/>
            <person name="Dolan A."/>
        </authorList>
    </citation>
    <scope>NUCLEOTIDE SEQUENCE [LARGE SCALE GENOMIC DNA]</scope>
</reference>
<sequence length="318" mass="34344">MITDCFEADIAIPSGISRPDAAALQRCEGRVVFLPTIRRQLALADVAHESFVSGGVSPDTLGLLLAYRRRFPAVITRVLPTRIVACPVDLGLTHAGTVNLRNTSPVDLCNGDPVSLVPPVFEGQATDVRLESLDLTLRFPVPLPTPLAREIVARLVARGIRDLNPDPRTPGELPDLNVLYYNGARLSLVADVQQLASVNTELRSLVLNMVYSITEGTTLILTLIPRLLALSAQDGYVNALLQMQSVTREAAQLIHPEAPMLMQDGERRLPLYEALVAWLAHAGQLGDILALAPAVRVCTFDGAAVVQSGDMAPVIRYP</sequence>
<dbReference type="EMBL" id="Z86099">
    <property type="protein sequence ID" value="CAB06742.1"/>
    <property type="molecule type" value="Genomic_DNA"/>
</dbReference>
<dbReference type="RefSeq" id="YP_009137169.1">
    <property type="nucleotide sequence ID" value="NC_001798.2"/>
</dbReference>
<dbReference type="PDB" id="5ZZ8">
    <property type="method" value="EM"/>
    <property type="resolution" value="3.75 A"/>
    <property type="chains" value="2/3/R/S/U/V/X/Y/x/y=1-318"/>
</dbReference>
<dbReference type="PDB" id="6M6G">
    <property type="method" value="EM"/>
    <property type="resolution" value="5.39 A"/>
    <property type="chains" value="K/O=1-318"/>
</dbReference>
<dbReference type="PDB" id="6M6H">
    <property type="method" value="EM"/>
    <property type="resolution" value="4.50 A"/>
    <property type="chains" value="R/S=1-318"/>
</dbReference>
<dbReference type="PDBsum" id="5ZZ8"/>
<dbReference type="PDBsum" id="6M6G"/>
<dbReference type="PDBsum" id="6M6H"/>
<dbReference type="EMDB" id="EMD-6976"/>
<dbReference type="SMR" id="P89441"/>
<dbReference type="DNASU" id="1487301"/>
<dbReference type="GeneID" id="1487301"/>
<dbReference type="KEGG" id="vg:1487301"/>
<dbReference type="Proteomes" id="UP000001874">
    <property type="component" value="Segment"/>
</dbReference>
<dbReference type="GO" id="GO:0042025">
    <property type="term" value="C:host cell nucleus"/>
    <property type="evidence" value="ECO:0007669"/>
    <property type="project" value="UniProtKB-SubCell"/>
</dbReference>
<dbReference type="GO" id="GO:0019028">
    <property type="term" value="C:viral capsid"/>
    <property type="evidence" value="ECO:0007669"/>
    <property type="project" value="UniProtKB-KW"/>
</dbReference>
<dbReference type="GO" id="GO:0005198">
    <property type="term" value="F:structural molecule activity"/>
    <property type="evidence" value="ECO:0007669"/>
    <property type="project" value="InterPro"/>
</dbReference>
<dbReference type="HAMAP" id="MF_04019">
    <property type="entry name" value="HSV_TRX2"/>
    <property type="match status" value="1"/>
</dbReference>
<dbReference type="InterPro" id="IPR002690">
    <property type="entry name" value="Herpes_capsid_2"/>
</dbReference>
<dbReference type="Pfam" id="PF01802">
    <property type="entry name" value="Herpes_V23"/>
    <property type="match status" value="1"/>
</dbReference>
<comment type="function">
    <text evidence="1">Structural component of the T=16 icosahedral capsid. The capsid is composed of pentamers and hexamers of major capsid protein/MCP, which are linked together by heterotrimers called triplexes. These triplexes are formed by a single molecule of triplex protein 1/TRX1 and two copies of triplex protein 2/TRX2. Additionally, TRX1 is required for efficient transport of TRX2 to the nucleus, which is the site of capsid assembly.</text>
</comment>
<comment type="subunit">
    <text evidence="1">Interacts with TRX1 and major capisd protein/MCP.</text>
</comment>
<comment type="subcellular location">
    <subcellularLocation>
        <location evidence="1">Virion</location>
    </subcellularLocation>
    <subcellularLocation>
        <location evidence="1">Host nucleus</location>
    </subcellularLocation>
</comment>
<comment type="similarity">
    <text evidence="1">Belongs to the herpesviridae TRX2 protein family.</text>
</comment>
<name>TRX2_HHV2H</name>
<accession>P89441</accession>
<evidence type="ECO:0000255" key="1">
    <source>
        <dbReference type="HAMAP-Rule" id="MF_04019"/>
    </source>
</evidence>
<proteinExistence type="evidence at protein level"/>
<feature type="chain" id="PRO_0000406184" description="Triplex capsid protein 2">
    <location>
        <begin position="1"/>
        <end position="318"/>
    </location>
</feature>
<keyword id="KW-0002">3D-structure</keyword>
<keyword id="KW-0167">Capsid protein</keyword>
<keyword id="KW-1048">Host nucleus</keyword>
<keyword id="KW-1185">Reference proteome</keyword>
<keyword id="KW-0946">Virion</keyword>
<gene>
    <name evidence="1" type="primary">TRX2</name>
    <name type="ordered locus">UL18</name>
</gene>
<protein>
    <recommendedName>
        <fullName evidence="1">Triplex capsid protein 2</fullName>
    </recommendedName>
</protein>